<keyword id="KW-0687">Ribonucleoprotein</keyword>
<keyword id="KW-0689">Ribosomal protein</keyword>
<keyword id="KW-0694">RNA-binding</keyword>
<keyword id="KW-0699">rRNA-binding</keyword>
<keyword id="KW-0820">tRNA-binding</keyword>
<accession>Q5PIV0</accession>
<name>RL16_SALPA</name>
<proteinExistence type="inferred from homology"/>
<gene>
    <name evidence="1" type="primary">rplP</name>
    <name type="ordered locus">SPA3299</name>
</gene>
<sequence>MLQPKRTKFRKMHKGRNRGLAAGADVSFGSFGLKAVGRGRLTARQIEAARRAMTRAVKRQGKIWIRVFPDKPITEKPLAVRMGKGKGNVEYWVALIQPGKVLYEMDGVPEELAREAFKLAAAKLPIKTTFVTKTVM</sequence>
<organism>
    <name type="scientific">Salmonella paratyphi A (strain ATCC 9150 / SARB42)</name>
    <dbReference type="NCBI Taxonomy" id="295319"/>
    <lineage>
        <taxon>Bacteria</taxon>
        <taxon>Pseudomonadati</taxon>
        <taxon>Pseudomonadota</taxon>
        <taxon>Gammaproteobacteria</taxon>
        <taxon>Enterobacterales</taxon>
        <taxon>Enterobacteriaceae</taxon>
        <taxon>Salmonella</taxon>
    </lineage>
</organism>
<dbReference type="EMBL" id="CP000026">
    <property type="protein sequence ID" value="AAV79115.1"/>
    <property type="molecule type" value="Genomic_DNA"/>
</dbReference>
<dbReference type="RefSeq" id="WP_000941208.1">
    <property type="nucleotide sequence ID" value="NC_006511.1"/>
</dbReference>
<dbReference type="SMR" id="Q5PIV0"/>
<dbReference type="GeneID" id="93035738"/>
<dbReference type="KEGG" id="spt:SPA3299"/>
<dbReference type="HOGENOM" id="CLU_078858_2_1_6"/>
<dbReference type="Proteomes" id="UP000008185">
    <property type="component" value="Chromosome"/>
</dbReference>
<dbReference type="GO" id="GO:0022625">
    <property type="term" value="C:cytosolic large ribosomal subunit"/>
    <property type="evidence" value="ECO:0007669"/>
    <property type="project" value="TreeGrafter"/>
</dbReference>
<dbReference type="GO" id="GO:0019843">
    <property type="term" value="F:rRNA binding"/>
    <property type="evidence" value="ECO:0007669"/>
    <property type="project" value="UniProtKB-UniRule"/>
</dbReference>
<dbReference type="GO" id="GO:0003735">
    <property type="term" value="F:structural constituent of ribosome"/>
    <property type="evidence" value="ECO:0007669"/>
    <property type="project" value="InterPro"/>
</dbReference>
<dbReference type="GO" id="GO:0000049">
    <property type="term" value="F:tRNA binding"/>
    <property type="evidence" value="ECO:0007669"/>
    <property type="project" value="UniProtKB-KW"/>
</dbReference>
<dbReference type="GO" id="GO:0006412">
    <property type="term" value="P:translation"/>
    <property type="evidence" value="ECO:0007669"/>
    <property type="project" value="UniProtKB-UniRule"/>
</dbReference>
<dbReference type="CDD" id="cd01433">
    <property type="entry name" value="Ribosomal_L16_L10e"/>
    <property type="match status" value="1"/>
</dbReference>
<dbReference type="FunFam" id="3.90.1170.10:FF:000001">
    <property type="entry name" value="50S ribosomal protein L16"/>
    <property type="match status" value="1"/>
</dbReference>
<dbReference type="Gene3D" id="3.90.1170.10">
    <property type="entry name" value="Ribosomal protein L10e/L16"/>
    <property type="match status" value="1"/>
</dbReference>
<dbReference type="HAMAP" id="MF_01342">
    <property type="entry name" value="Ribosomal_uL16"/>
    <property type="match status" value="1"/>
</dbReference>
<dbReference type="InterPro" id="IPR047873">
    <property type="entry name" value="Ribosomal_uL16"/>
</dbReference>
<dbReference type="InterPro" id="IPR000114">
    <property type="entry name" value="Ribosomal_uL16_bact-type"/>
</dbReference>
<dbReference type="InterPro" id="IPR020798">
    <property type="entry name" value="Ribosomal_uL16_CS"/>
</dbReference>
<dbReference type="InterPro" id="IPR016180">
    <property type="entry name" value="Ribosomal_uL16_dom"/>
</dbReference>
<dbReference type="InterPro" id="IPR036920">
    <property type="entry name" value="Ribosomal_uL16_sf"/>
</dbReference>
<dbReference type="NCBIfam" id="TIGR01164">
    <property type="entry name" value="rplP_bact"/>
    <property type="match status" value="1"/>
</dbReference>
<dbReference type="PANTHER" id="PTHR12220">
    <property type="entry name" value="50S/60S RIBOSOMAL PROTEIN L16"/>
    <property type="match status" value="1"/>
</dbReference>
<dbReference type="PANTHER" id="PTHR12220:SF13">
    <property type="entry name" value="LARGE RIBOSOMAL SUBUNIT PROTEIN UL16M"/>
    <property type="match status" value="1"/>
</dbReference>
<dbReference type="Pfam" id="PF00252">
    <property type="entry name" value="Ribosomal_L16"/>
    <property type="match status" value="1"/>
</dbReference>
<dbReference type="PRINTS" id="PR00060">
    <property type="entry name" value="RIBOSOMALL16"/>
</dbReference>
<dbReference type="SUPFAM" id="SSF54686">
    <property type="entry name" value="Ribosomal protein L16p/L10e"/>
    <property type="match status" value="1"/>
</dbReference>
<dbReference type="PROSITE" id="PS00586">
    <property type="entry name" value="RIBOSOMAL_L16_1"/>
    <property type="match status" value="1"/>
</dbReference>
<dbReference type="PROSITE" id="PS00701">
    <property type="entry name" value="RIBOSOMAL_L16_2"/>
    <property type="match status" value="1"/>
</dbReference>
<reference key="1">
    <citation type="journal article" date="2004" name="Nat. Genet.">
        <title>Comparison of genome degradation in Paratyphi A and Typhi, human-restricted serovars of Salmonella enterica that cause typhoid.</title>
        <authorList>
            <person name="McClelland M."/>
            <person name="Sanderson K.E."/>
            <person name="Clifton S.W."/>
            <person name="Latreille P."/>
            <person name="Porwollik S."/>
            <person name="Sabo A."/>
            <person name="Meyer R."/>
            <person name="Bieri T."/>
            <person name="Ozersky P."/>
            <person name="McLellan M."/>
            <person name="Harkins C.R."/>
            <person name="Wang C."/>
            <person name="Nguyen C."/>
            <person name="Berghoff A."/>
            <person name="Elliott G."/>
            <person name="Kohlberg S."/>
            <person name="Strong C."/>
            <person name="Du F."/>
            <person name="Carter J."/>
            <person name="Kremizki C."/>
            <person name="Layman D."/>
            <person name="Leonard S."/>
            <person name="Sun H."/>
            <person name="Fulton L."/>
            <person name="Nash W."/>
            <person name="Miner T."/>
            <person name="Minx P."/>
            <person name="Delehaunty K."/>
            <person name="Fronick C."/>
            <person name="Magrini V."/>
            <person name="Nhan M."/>
            <person name="Warren W."/>
            <person name="Florea L."/>
            <person name="Spieth J."/>
            <person name="Wilson R.K."/>
        </authorList>
    </citation>
    <scope>NUCLEOTIDE SEQUENCE [LARGE SCALE GENOMIC DNA]</scope>
    <source>
        <strain>ATCC 9150 / SARB42</strain>
    </source>
</reference>
<evidence type="ECO:0000255" key="1">
    <source>
        <dbReference type="HAMAP-Rule" id="MF_01342"/>
    </source>
</evidence>
<evidence type="ECO:0000305" key="2"/>
<comment type="function">
    <text evidence="1">Binds 23S rRNA and is also seen to make contacts with the A and possibly P site tRNAs.</text>
</comment>
<comment type="subunit">
    <text evidence="1">Part of the 50S ribosomal subunit.</text>
</comment>
<comment type="similarity">
    <text evidence="1">Belongs to the universal ribosomal protein uL16 family.</text>
</comment>
<protein>
    <recommendedName>
        <fullName evidence="1">Large ribosomal subunit protein uL16</fullName>
    </recommendedName>
    <alternativeName>
        <fullName evidence="2">50S ribosomal protein L16</fullName>
    </alternativeName>
</protein>
<feature type="chain" id="PRO_0000062192" description="Large ribosomal subunit protein uL16">
    <location>
        <begin position="1"/>
        <end position="136"/>
    </location>
</feature>